<name>CHMP5_HUMAN</name>
<sequence>MNRLFGKAKPKAPPPSLTDCIGTVDSRAESIDKKISRLDAELVKYKDQIKKMREGPAKNMVKQKALRVLKQKRMYEQQRDNLAQQSFNMEQANYTIQSLKDTKTTVDAMKLGVKEMKKAYKQVKIDQIEDLQDQLEDMMEDANEIQEALSRSYGTPELDEDDLEAELDALGDELLADEDSSYLDEAASAPAIPEGVPTDTKNKDGVLVDEFGLPQIPAS</sequence>
<accession>Q9NZZ3</accession>
<accession>B2RD95</accession>
<accession>B4DIR6</accession>
<accession>Q5VXW2</accession>
<accession>Q96AV2</accession>
<accession>Q9HB68</accession>
<accession>Q9NYS4</accession>
<accession>Q9Y323</accession>
<keyword id="KW-0002">3D-structure</keyword>
<keyword id="KW-0025">Alternative splicing</keyword>
<keyword id="KW-0175">Coiled coil</keyword>
<keyword id="KW-0963">Cytoplasm</keyword>
<keyword id="KW-0967">Endosome</keyword>
<keyword id="KW-0449">Lipoprotein</keyword>
<keyword id="KW-0472">Membrane</keyword>
<keyword id="KW-0597">Phosphoprotein</keyword>
<keyword id="KW-0653">Protein transport</keyword>
<keyword id="KW-1267">Proteomics identification</keyword>
<keyword id="KW-1185">Reference proteome</keyword>
<keyword id="KW-0813">Transport</keyword>
<keyword id="KW-0832">Ubl conjugation</keyword>
<proteinExistence type="evidence at protein level"/>
<organism>
    <name type="scientific">Homo sapiens</name>
    <name type="common">Human</name>
    <dbReference type="NCBI Taxonomy" id="9606"/>
    <lineage>
        <taxon>Eukaryota</taxon>
        <taxon>Metazoa</taxon>
        <taxon>Chordata</taxon>
        <taxon>Craniata</taxon>
        <taxon>Vertebrata</taxon>
        <taxon>Euteleostomi</taxon>
        <taxon>Mammalia</taxon>
        <taxon>Eutheria</taxon>
        <taxon>Euarchontoglires</taxon>
        <taxon>Primates</taxon>
        <taxon>Haplorrhini</taxon>
        <taxon>Catarrhini</taxon>
        <taxon>Hominidae</taxon>
        <taxon>Homo</taxon>
    </lineage>
</organism>
<protein>
    <recommendedName>
        <fullName>Charged multivesicular body protein 5</fullName>
    </recommendedName>
    <alternativeName>
        <fullName>Chromatin-modifying protein 5</fullName>
    </alternativeName>
    <alternativeName>
        <fullName>SNF7 domain-containing protein 2</fullName>
    </alternativeName>
    <alternativeName>
        <fullName>Vacuolar protein sorting-associated protein 60</fullName>
        <shortName>Vps60</shortName>
        <shortName>hVps60</shortName>
    </alternativeName>
</protein>
<comment type="function">
    <text evidence="3">Probable peripherally associated component of the endosomal sorting required for transport complex III (ESCRT-III) which is involved in multivesicular bodies (MVBs) formation and sorting of endosomal cargo proteins into MVBs. MVBs contain intraluminal vesicles (ILVs) that are generated by invagination and scission from the limiting membrane of the endosome and mostly are delivered to lysosomes enabling degradation of membrane proteins, such as stimulated growth factor receptors, lysosomal enzymes and lipids. The MVB pathway appears to require the sequential function of ESCRT-O, -I,-II and -III complexes. ESCRT-III proteins mostly dissociate from the invaginating membrane before the ILV is released. The ESCRT machinery also functions in topologically equivalent membrane fission events, such as the terminal stages of cytokinesis and the budding of enveloped viruses (HIV-1 and other lentiviruses) (PubMed:14519844). ESCRT-III proteins are believed to mediate the necessary vesicle extrusion and/or membrane fission activities, possibly in conjunction with the AAA ATPase VPS4. Involved in HIV-1 p6- and p9-dependent virus release (PubMed:14519844).</text>
</comment>
<comment type="subunit">
    <text evidence="3 4 5 7 8 9">Probable peripherally associated component of the endosomal sorting required for transport complex III (ESCRT-III). ESCRT-III components are thought to multimerize to form a flat lattice on the perimeter membrane of the endosome. Several assembly forms of ESCRT-III may exist that interact and act sequentially. Interacts with VTA1; the interaction involves soluble CHMP5 (PubMed:15644320, PubMed:17261583, PubMed:21543490). Interacts with CHMP2A (PubMed:14519844). Interacts with NOD2 (PubMed:27812135). Interacts with BROX (PubMed:22484091).</text>
</comment>
<comment type="interaction">
    <interactant intactId="EBI-751303">
        <id>Q9NZZ3</id>
    </interactant>
    <interactant intactId="EBI-749627">
        <id>Q9H444</id>
        <label>CHMP4B</label>
    </interactant>
    <organismsDiffer>false</organismsDiffer>
    <experiments>4</experiments>
</comment>
<comment type="interaction">
    <interactant intactId="EBI-751303">
        <id>Q9NZZ3</id>
    </interactant>
    <interactant intactId="EBI-2691489">
        <id>Q8WV92</id>
        <label>MITD1</label>
    </interactant>
    <organismsDiffer>false</organismsDiffer>
    <experiments>3</experiments>
</comment>
<comment type="interaction">
    <interactant intactId="EBI-751303">
        <id>Q9NZZ3</id>
    </interactant>
    <interactant intactId="EBI-7445625">
        <id>Q9HC29</id>
        <label>NOD2</label>
    </interactant>
    <organismsDiffer>false</organismsDiffer>
    <experiments>5</experiments>
</comment>
<comment type="interaction">
    <interactant intactId="EBI-751303">
        <id>Q9NZZ3</id>
    </interactant>
    <interactant intactId="EBI-396676">
        <id>O95630</id>
        <label>STAMBP</label>
    </interactant>
    <organismsDiffer>false</organismsDiffer>
    <experiments>2</experiments>
</comment>
<comment type="interaction">
    <interactant intactId="EBI-751303">
        <id>Q9NZZ3</id>
    </interactant>
    <interactant intactId="EBI-2514459">
        <id>O75351</id>
        <label>VPS4B</label>
    </interactant>
    <organismsDiffer>false</organismsDiffer>
    <experiments>6</experiments>
</comment>
<comment type="interaction">
    <interactant intactId="EBI-751303">
        <id>Q9NZZ3</id>
    </interactant>
    <interactant intactId="EBI-740160">
        <id>Q9NP79</id>
        <label>VTA1</label>
    </interactant>
    <organismsDiffer>false</organismsDiffer>
    <experiments>5</experiments>
</comment>
<comment type="interaction">
    <interactant intactId="EBI-15979532">
        <id>Q9NZZ3-1</id>
    </interactant>
    <interactant intactId="EBI-6286053">
        <id>Q5VW32</id>
        <label>BROX</label>
    </interactant>
    <organismsDiffer>false</organismsDiffer>
    <experiments>6</experiments>
</comment>
<comment type="subcellular location">
    <subcellularLocation>
        <location evidence="4">Cytoplasm</location>
        <location evidence="4">Cytosol</location>
    </subcellularLocation>
    <subcellularLocation>
        <location evidence="13">Endosome membrane</location>
        <topology evidence="13">Peripheral membrane protein</topology>
    </subcellularLocation>
    <subcellularLocation>
        <location evidence="6">Midbody</location>
    </subcellularLocation>
    <text evidence="6">Localizes to the midbody of dividing cells (PubMed:17853893). Localized in two distinct rings on either side of the Flemming body (PubMed:17853893).</text>
</comment>
<comment type="alternative products">
    <event type="alternative splicing"/>
    <isoform>
        <id>Q9NZZ3-1</id>
        <name>1</name>
        <sequence type="displayed"/>
    </isoform>
    <isoform>
        <id>Q9NZZ3-2</id>
        <name>2</name>
        <sequence type="described" ref="VSP_042556"/>
    </isoform>
</comment>
<comment type="induction">
    <text evidence="9">Up-regulated by muramyl-dipeptide and lipopolysaccharide.</text>
</comment>
<comment type="PTM">
    <text evidence="10">(Microbial infection) Stearoylated By S.flexneri N-epsilon-fatty acyltransferase IcsB, promoting S.flexneri evasion of autophagy.</text>
</comment>
<comment type="PTM">
    <text evidence="7">ISGylated. Isgylation inhibits its interaction with VTA1.</text>
</comment>
<comment type="similarity">
    <text evidence="13">Belongs to the SNF7 family.</text>
</comment>
<comment type="sequence caution" evidence="13">
    <conflict type="erroneous initiation">
        <sequence resource="EMBL-CDS" id="AAG23821"/>
    </conflict>
</comment>
<evidence type="ECO:0000255" key="1"/>
<evidence type="ECO:0000256" key="2">
    <source>
        <dbReference type="SAM" id="MobiDB-lite"/>
    </source>
</evidence>
<evidence type="ECO:0000269" key="3">
    <source>
    </source>
</evidence>
<evidence type="ECO:0000269" key="4">
    <source>
    </source>
</evidence>
<evidence type="ECO:0000269" key="5">
    <source>
    </source>
</evidence>
<evidence type="ECO:0000269" key="6">
    <source>
    </source>
</evidence>
<evidence type="ECO:0000269" key="7">
    <source>
    </source>
</evidence>
<evidence type="ECO:0000269" key="8">
    <source>
    </source>
</evidence>
<evidence type="ECO:0000269" key="9">
    <source>
    </source>
</evidence>
<evidence type="ECO:0000269" key="10">
    <source>
    </source>
</evidence>
<evidence type="ECO:0000303" key="11">
    <source>
    </source>
</evidence>
<evidence type="ECO:0000303" key="12">
    <source>
    </source>
</evidence>
<evidence type="ECO:0000305" key="13"/>
<evidence type="ECO:0007744" key="14">
    <source>
        <dbReference type="PDB" id="3ULY"/>
    </source>
</evidence>
<evidence type="ECO:0007744" key="15">
    <source>
        <dbReference type="PDB" id="3UM0"/>
    </source>
</evidence>
<evidence type="ECO:0007744" key="16">
    <source>
        <dbReference type="PDB" id="3UM1"/>
    </source>
</evidence>
<evidence type="ECO:0007744" key="17">
    <source>
        <dbReference type="PDB" id="3UM2"/>
    </source>
</evidence>
<evidence type="ECO:0007744" key="18">
    <source>
    </source>
</evidence>
<evidence type="ECO:0007829" key="19">
    <source>
        <dbReference type="PDB" id="4TXR"/>
    </source>
</evidence>
<gene>
    <name type="primary">CHMP5</name>
    <name type="synonym">C9orf83</name>
    <name type="synonym">SNF7DC2</name>
    <name evidence="11" type="ORF">CGI-34</name>
    <name type="ORF">HSPC177</name>
    <name type="ORF">PNAS-114</name>
    <name type="ORF">PNAS-2</name>
</gene>
<feature type="chain" id="PRO_0000211500" description="Charged multivesicular body protein 5">
    <location>
        <begin position="1"/>
        <end position="219"/>
    </location>
</feature>
<feature type="region of interest" description="Disordered" evidence="2">
    <location>
        <begin position="1"/>
        <end position="21"/>
    </location>
</feature>
<feature type="region of interest" description="Interaction with VTA1">
    <location>
        <begin position="121"/>
        <end position="158"/>
    </location>
</feature>
<feature type="region of interest" description="Disordered" evidence="2">
    <location>
        <begin position="188"/>
        <end position="219"/>
    </location>
</feature>
<feature type="coiled-coil region" evidence="1">
    <location>
        <begin position="26"/>
        <end position="179"/>
    </location>
</feature>
<feature type="compositionally biased region" description="Basic residues" evidence="2">
    <location>
        <begin position="1"/>
        <end position="10"/>
    </location>
</feature>
<feature type="modified residue" description="Phosphoserine" evidence="18">
    <location>
        <position position="86"/>
    </location>
</feature>
<feature type="lipid moiety-binding region" description="(Microbial infection) N6-stearoyl lysine" evidence="10">
    <location>
        <position position="7"/>
    </location>
</feature>
<feature type="splice variant" id="VSP_042556" description="In isoform 2." evidence="12">
    <original>ELDALGDELLADEDSSYLDEAASAPAIPEGVPTDTKNKDGVLVDEFGLPQIPAS</original>
    <variation>GWSSGG</variation>
    <location>
        <begin position="166"/>
        <end position="219"/>
    </location>
</feature>
<feature type="mutagenesis site" description="Decreased stearoylation in response to S.flexneri infection." evidence="10">
    <original>KAKPK</original>
    <variation>RARPR</variation>
    <location>
        <begin position="7"/>
        <end position="11"/>
    </location>
</feature>
<feature type="mutagenesis site" description="Decreased stearoylation in response to S.flexneri infection." evidence="10">
    <original>K</original>
    <variation>R</variation>
    <location>
        <position position="7"/>
    </location>
</feature>
<feature type="sequence conflict" description="In Ref. 1; AAD27743." evidence="13" ref="1">
    <original>P</original>
    <variation>R</variation>
    <location>
        <position position="14"/>
    </location>
</feature>
<feature type="sequence conflict" description="In Ref. 6; AAH16698." evidence="13" ref="6">
    <original>D</original>
    <variation>G</variation>
    <location>
        <position position="19"/>
    </location>
</feature>
<feature type="sequence conflict" description="In Ref. 1; AAD27743." evidence="13" ref="1">
    <original>QQSFNMEQAN</original>
    <variation>NSHSTWTGH</variation>
    <location>
        <begin position="84"/>
        <end position="93"/>
    </location>
</feature>
<feature type="sequence conflict" description="In Ref. 1; AAD27743." evidence="13" ref="1">
    <original>Q</original>
    <variation>P</variation>
    <location>
        <position position="122"/>
    </location>
</feature>
<feature type="helix" evidence="19">
    <location>
        <begin position="160"/>
        <end position="175"/>
    </location>
</feature>
<feature type="helix" evidence="19">
    <location>
        <begin position="182"/>
        <end position="188"/>
    </location>
</feature>
<dbReference type="EMBL" id="AF132968">
    <property type="protein sequence ID" value="AAD27743.1"/>
    <property type="molecule type" value="mRNA"/>
</dbReference>
<dbReference type="EMBL" id="AF161525">
    <property type="protein sequence ID" value="AAF29140.1"/>
    <property type="molecule type" value="mRNA"/>
</dbReference>
<dbReference type="EMBL" id="AK295744">
    <property type="protein sequence ID" value="BAG58578.1"/>
    <property type="molecule type" value="mRNA"/>
</dbReference>
<dbReference type="EMBL" id="AK315455">
    <property type="protein sequence ID" value="BAG37842.1"/>
    <property type="molecule type" value="mRNA"/>
</dbReference>
<dbReference type="EMBL" id="AL356472">
    <property type="status" value="NOT_ANNOTATED_CDS"/>
    <property type="molecule type" value="Genomic_DNA"/>
</dbReference>
<dbReference type="EMBL" id="CH471071">
    <property type="protein sequence ID" value="EAW58512.1"/>
    <property type="molecule type" value="Genomic_DNA"/>
</dbReference>
<dbReference type="EMBL" id="BC006974">
    <property type="protein sequence ID" value="AAH06974.1"/>
    <property type="molecule type" value="mRNA"/>
</dbReference>
<dbReference type="EMBL" id="BC007457">
    <property type="protein sequence ID" value="AAH07457.1"/>
    <property type="molecule type" value="mRNA"/>
</dbReference>
<dbReference type="EMBL" id="BC016698">
    <property type="protein sequence ID" value="AAH16698.1"/>
    <property type="molecule type" value="mRNA"/>
</dbReference>
<dbReference type="EMBL" id="BC020796">
    <property type="protein sequence ID" value="AAH20796.1"/>
    <property type="molecule type" value="mRNA"/>
</dbReference>
<dbReference type="EMBL" id="BC021168">
    <property type="protein sequence ID" value="AAH21168.1"/>
    <property type="molecule type" value="mRNA"/>
</dbReference>
<dbReference type="EMBL" id="AF275810">
    <property type="protein sequence ID" value="AAG23821.1"/>
    <property type="status" value="ALT_INIT"/>
    <property type="molecule type" value="mRNA"/>
</dbReference>
<dbReference type="EMBL" id="AF229832">
    <property type="protein sequence ID" value="AAF42917.1"/>
    <property type="molecule type" value="mRNA"/>
</dbReference>
<dbReference type="CCDS" id="CCDS56569.1">
    <molecule id="Q9NZZ3-2"/>
</dbReference>
<dbReference type="CCDS" id="CCDS6537.1">
    <molecule id="Q9NZZ3-1"/>
</dbReference>
<dbReference type="RefSeq" id="NP_001182465.1">
    <molecule id="Q9NZZ3-2"/>
    <property type="nucleotide sequence ID" value="NM_001195536.2"/>
</dbReference>
<dbReference type="RefSeq" id="NP_057494.3">
    <molecule id="Q9NZZ3-1"/>
    <property type="nucleotide sequence ID" value="NM_016410.5"/>
</dbReference>
<dbReference type="PDB" id="2LXM">
    <property type="method" value="NMR"/>
    <property type="chains" value="B=139-195"/>
</dbReference>
<dbReference type="PDB" id="3ULY">
    <property type="method" value="X-ray"/>
    <property type="resolution" value="2.60 A"/>
    <property type="chains" value="B=151-219"/>
</dbReference>
<dbReference type="PDB" id="3UM0">
    <property type="method" value="X-ray"/>
    <property type="resolution" value="3.10 A"/>
    <property type="chains" value="B=200-219"/>
</dbReference>
<dbReference type="PDB" id="3UM1">
    <property type="method" value="X-ray"/>
    <property type="resolution" value="2.71 A"/>
    <property type="chains" value="B/E=151-219"/>
</dbReference>
<dbReference type="PDB" id="3UM2">
    <property type="method" value="X-ray"/>
    <property type="resolution" value="2.59 A"/>
    <property type="chains" value="B/E=200-219"/>
</dbReference>
<dbReference type="PDB" id="4TXR">
    <property type="method" value="X-ray"/>
    <property type="resolution" value="1.00 A"/>
    <property type="chains" value="C=139-195"/>
</dbReference>
<dbReference type="PDBsum" id="2LXM"/>
<dbReference type="PDBsum" id="3ULY"/>
<dbReference type="PDBsum" id="3UM0"/>
<dbReference type="PDBsum" id="3UM1"/>
<dbReference type="PDBsum" id="3UM2"/>
<dbReference type="PDBsum" id="4TXR"/>
<dbReference type="BMRB" id="Q9NZZ3"/>
<dbReference type="SMR" id="Q9NZZ3"/>
<dbReference type="BioGRID" id="119579">
    <property type="interactions" value="101"/>
</dbReference>
<dbReference type="ComplexPortal" id="CPX-329">
    <property type="entry name" value="ESCRT-III complex"/>
</dbReference>
<dbReference type="CORUM" id="Q9NZZ3"/>
<dbReference type="DIP" id="DIP-50420N"/>
<dbReference type="FunCoup" id="Q9NZZ3">
    <property type="interactions" value="3047"/>
</dbReference>
<dbReference type="IntAct" id="Q9NZZ3">
    <property type="interactions" value="62"/>
</dbReference>
<dbReference type="MINT" id="Q9NZZ3"/>
<dbReference type="STRING" id="9606.ENSP00000223500"/>
<dbReference type="GlyCosmos" id="Q9NZZ3">
    <property type="glycosylation" value="1 site, 1 glycan"/>
</dbReference>
<dbReference type="GlyGen" id="Q9NZZ3">
    <property type="glycosylation" value="3 sites, 1 N-linked glycan (1 site), 1 O-linked glycan (2 sites)"/>
</dbReference>
<dbReference type="iPTMnet" id="Q9NZZ3"/>
<dbReference type="MetOSite" id="Q9NZZ3"/>
<dbReference type="PhosphoSitePlus" id="Q9NZZ3"/>
<dbReference type="BioMuta" id="CHMP5"/>
<dbReference type="DMDM" id="51702157"/>
<dbReference type="jPOST" id="Q9NZZ3"/>
<dbReference type="MassIVE" id="Q9NZZ3"/>
<dbReference type="PaxDb" id="9606-ENSP00000223500"/>
<dbReference type="PeptideAtlas" id="Q9NZZ3"/>
<dbReference type="ProteomicsDB" id="83526">
    <molecule id="Q9NZZ3-1"/>
</dbReference>
<dbReference type="ProteomicsDB" id="83527">
    <molecule id="Q9NZZ3-2"/>
</dbReference>
<dbReference type="Pumba" id="Q9NZZ3"/>
<dbReference type="TopDownProteomics" id="Q9NZZ3-1">
    <molecule id="Q9NZZ3-1"/>
</dbReference>
<dbReference type="Antibodypedia" id="25186">
    <property type="antibodies" value="233 antibodies from 28 providers"/>
</dbReference>
<dbReference type="DNASU" id="51510"/>
<dbReference type="Ensembl" id="ENST00000223500.9">
    <molecule id="Q9NZZ3-1"/>
    <property type="protein sequence ID" value="ENSP00000223500.7"/>
    <property type="gene ID" value="ENSG00000086065.14"/>
</dbReference>
<dbReference type="Ensembl" id="ENST00000419016.6">
    <molecule id="Q9NZZ3-2"/>
    <property type="protein sequence ID" value="ENSP00000442725.1"/>
    <property type="gene ID" value="ENSG00000086065.14"/>
</dbReference>
<dbReference type="GeneID" id="51510"/>
<dbReference type="KEGG" id="hsa:51510"/>
<dbReference type="MANE-Select" id="ENST00000223500.9">
    <property type="protein sequence ID" value="ENSP00000223500.7"/>
    <property type="RefSeq nucleotide sequence ID" value="NM_016410.6"/>
    <property type="RefSeq protein sequence ID" value="NP_057494.3"/>
</dbReference>
<dbReference type="UCSC" id="uc003zsm.5">
    <molecule id="Q9NZZ3-1"/>
    <property type="organism name" value="human"/>
</dbReference>
<dbReference type="AGR" id="HGNC:26942"/>
<dbReference type="CTD" id="51510"/>
<dbReference type="DisGeNET" id="51510"/>
<dbReference type="GeneCards" id="CHMP5"/>
<dbReference type="HGNC" id="HGNC:26942">
    <property type="gene designation" value="CHMP5"/>
</dbReference>
<dbReference type="HPA" id="ENSG00000086065">
    <property type="expression patterns" value="Low tissue specificity"/>
</dbReference>
<dbReference type="MalaCards" id="CHMP5"/>
<dbReference type="MIM" id="610900">
    <property type="type" value="gene"/>
</dbReference>
<dbReference type="neXtProt" id="NX_Q9NZZ3"/>
<dbReference type="OpenTargets" id="ENSG00000086065"/>
<dbReference type="PharmGKB" id="PA134903143"/>
<dbReference type="VEuPathDB" id="HostDB:ENSG00000086065"/>
<dbReference type="eggNOG" id="KOG1655">
    <property type="taxonomic scope" value="Eukaryota"/>
</dbReference>
<dbReference type="GeneTree" id="ENSGT00550000074817"/>
<dbReference type="HOGENOM" id="CLU_079409_0_0_1"/>
<dbReference type="InParanoid" id="Q9NZZ3"/>
<dbReference type="OMA" id="GVKQMQK"/>
<dbReference type="OrthoDB" id="3973241at2759"/>
<dbReference type="PAN-GO" id="Q9NZZ3">
    <property type="GO annotations" value="3 GO annotations based on evolutionary models"/>
</dbReference>
<dbReference type="PhylomeDB" id="Q9NZZ3"/>
<dbReference type="TreeFam" id="TF300122"/>
<dbReference type="PathwayCommons" id="Q9NZZ3"/>
<dbReference type="Reactome" id="R-HSA-162588">
    <property type="pathway name" value="Budding and maturation of HIV virion"/>
</dbReference>
<dbReference type="Reactome" id="R-HSA-917729">
    <property type="pathway name" value="Endosomal Sorting Complex Required For Transport (ESCRT)"/>
</dbReference>
<dbReference type="SignaLink" id="Q9NZZ3"/>
<dbReference type="SIGNOR" id="Q9NZZ3"/>
<dbReference type="BioGRID-ORCS" id="51510">
    <property type="hits" value="477 hits in 1128 CRISPR screens"/>
</dbReference>
<dbReference type="ChiTaRS" id="CHMP5">
    <property type="organism name" value="human"/>
</dbReference>
<dbReference type="EvolutionaryTrace" id="Q9NZZ3"/>
<dbReference type="GeneWiki" id="CHMP5"/>
<dbReference type="GenomeRNAi" id="51510"/>
<dbReference type="Pharos" id="Q9NZZ3">
    <property type="development level" value="Tbio"/>
</dbReference>
<dbReference type="PRO" id="PR:Q9NZZ3"/>
<dbReference type="Proteomes" id="UP000005640">
    <property type="component" value="Chromosome 9"/>
</dbReference>
<dbReference type="RNAct" id="Q9NZZ3">
    <property type="molecule type" value="protein"/>
</dbReference>
<dbReference type="Bgee" id="ENSG00000086065">
    <property type="expression patterns" value="Expressed in germinal epithelium of ovary and 210 other cell types or tissues"/>
</dbReference>
<dbReference type="GO" id="GO:1904930">
    <property type="term" value="C:amphisome membrane"/>
    <property type="evidence" value="ECO:0000314"/>
    <property type="project" value="ComplexPortal"/>
</dbReference>
<dbReference type="GO" id="GO:0000421">
    <property type="term" value="C:autophagosome membrane"/>
    <property type="evidence" value="ECO:0000314"/>
    <property type="project" value="ComplexPortal"/>
</dbReference>
<dbReference type="GO" id="GO:0005829">
    <property type="term" value="C:cytosol"/>
    <property type="evidence" value="ECO:0000314"/>
    <property type="project" value="UniProtKB"/>
</dbReference>
<dbReference type="GO" id="GO:0000815">
    <property type="term" value="C:ESCRT III complex"/>
    <property type="evidence" value="ECO:0000303"/>
    <property type="project" value="ComplexPortal"/>
</dbReference>
<dbReference type="GO" id="GO:0070062">
    <property type="term" value="C:extracellular exosome"/>
    <property type="evidence" value="ECO:0007005"/>
    <property type="project" value="UniProtKB"/>
</dbReference>
<dbReference type="GO" id="GO:0000776">
    <property type="term" value="C:kinetochore"/>
    <property type="evidence" value="ECO:0000314"/>
    <property type="project" value="ComplexPortal"/>
</dbReference>
<dbReference type="GO" id="GO:0005828">
    <property type="term" value="C:kinetochore microtubule"/>
    <property type="evidence" value="ECO:0000314"/>
    <property type="project" value="ComplexPortal"/>
</dbReference>
<dbReference type="GO" id="GO:0005765">
    <property type="term" value="C:lysosomal membrane"/>
    <property type="evidence" value="ECO:0000314"/>
    <property type="project" value="ComplexPortal"/>
</dbReference>
<dbReference type="GO" id="GO:0030496">
    <property type="term" value="C:midbody"/>
    <property type="evidence" value="ECO:0000314"/>
    <property type="project" value="ComplexPortal"/>
</dbReference>
<dbReference type="GO" id="GO:0005771">
    <property type="term" value="C:multivesicular body"/>
    <property type="evidence" value="ECO:0000318"/>
    <property type="project" value="GO_Central"/>
</dbReference>
<dbReference type="GO" id="GO:0032585">
    <property type="term" value="C:multivesicular body membrane"/>
    <property type="evidence" value="ECO:0000314"/>
    <property type="project" value="ComplexPortal"/>
</dbReference>
<dbReference type="GO" id="GO:0005643">
    <property type="term" value="C:nuclear pore"/>
    <property type="evidence" value="ECO:0000314"/>
    <property type="project" value="ComplexPortal"/>
</dbReference>
<dbReference type="GO" id="GO:0005886">
    <property type="term" value="C:plasma membrane"/>
    <property type="evidence" value="ECO:0000314"/>
    <property type="project" value="ComplexPortal"/>
</dbReference>
<dbReference type="GO" id="GO:0045296">
    <property type="term" value="F:cadherin binding"/>
    <property type="evidence" value="ECO:0007005"/>
    <property type="project" value="BHF-UCL"/>
</dbReference>
<dbReference type="GO" id="GO:0097352">
    <property type="term" value="P:autophagosome maturation"/>
    <property type="evidence" value="ECO:0000315"/>
    <property type="project" value="ComplexPortal"/>
</dbReference>
<dbReference type="GO" id="GO:0006914">
    <property type="term" value="P:autophagy"/>
    <property type="evidence" value="ECO:0000315"/>
    <property type="project" value="ComplexPortal"/>
</dbReference>
<dbReference type="GO" id="GO:0071222">
    <property type="term" value="P:cellular response to lipopolysaccharide"/>
    <property type="evidence" value="ECO:0000315"/>
    <property type="project" value="UniProtKB"/>
</dbReference>
<dbReference type="GO" id="GO:0071225">
    <property type="term" value="P:cellular response to muramyl dipeptide"/>
    <property type="evidence" value="ECO:0000315"/>
    <property type="project" value="UniProtKB"/>
</dbReference>
<dbReference type="GO" id="GO:0030218">
    <property type="term" value="P:erythrocyte differentiation"/>
    <property type="evidence" value="ECO:0007669"/>
    <property type="project" value="Ensembl"/>
</dbReference>
<dbReference type="GO" id="GO:1904903">
    <property type="term" value="P:ESCRT III complex disassembly"/>
    <property type="evidence" value="ECO:0000303"/>
    <property type="project" value="ParkinsonsUK-UCL"/>
</dbReference>
<dbReference type="GO" id="GO:1902774">
    <property type="term" value="P:late endosome to lysosome transport"/>
    <property type="evidence" value="ECO:0000315"/>
    <property type="project" value="ComplexPortal"/>
</dbReference>
<dbReference type="GO" id="GO:0032511">
    <property type="term" value="P:late endosome to vacuole transport via multivesicular body sorting pathway"/>
    <property type="evidence" value="ECO:0000318"/>
    <property type="project" value="GO_Central"/>
</dbReference>
<dbReference type="GO" id="GO:0090148">
    <property type="term" value="P:membrane fission"/>
    <property type="evidence" value="ECO:0000303"/>
    <property type="project" value="ComplexPortal"/>
</dbReference>
<dbReference type="GO" id="GO:0061952">
    <property type="term" value="P:midbody abscission"/>
    <property type="evidence" value="ECO:0000315"/>
    <property type="project" value="UniProtKB"/>
</dbReference>
<dbReference type="GO" id="GO:0007080">
    <property type="term" value="P:mitotic metaphase chromosome alignment"/>
    <property type="evidence" value="ECO:0000315"/>
    <property type="project" value="UniProtKB"/>
</dbReference>
<dbReference type="GO" id="GO:0036258">
    <property type="term" value="P:multivesicular body assembly"/>
    <property type="evidence" value="ECO:0000303"/>
    <property type="project" value="ParkinsonsUK-UCL"/>
</dbReference>
<dbReference type="GO" id="GO:0071985">
    <property type="term" value="P:multivesicular body sorting pathway"/>
    <property type="evidence" value="ECO:0000314"/>
    <property type="project" value="ComplexPortal"/>
</dbReference>
<dbReference type="GO" id="GO:0061763">
    <property type="term" value="P:multivesicular body-lysosome fusion"/>
    <property type="evidence" value="ECO:0000303"/>
    <property type="project" value="ComplexPortal"/>
</dbReference>
<dbReference type="GO" id="GO:0031468">
    <property type="term" value="P:nuclear membrane reassembly"/>
    <property type="evidence" value="ECO:0000315"/>
    <property type="project" value="ComplexPortal"/>
</dbReference>
<dbReference type="GO" id="GO:0006997">
    <property type="term" value="P:nucleus organization"/>
    <property type="evidence" value="ECO:0000315"/>
    <property type="project" value="UniProtKB"/>
</dbReference>
<dbReference type="GO" id="GO:0001778">
    <property type="term" value="P:plasma membrane repair"/>
    <property type="evidence" value="ECO:0000314"/>
    <property type="project" value="ComplexPortal"/>
</dbReference>
<dbReference type="GO" id="GO:0015031">
    <property type="term" value="P:protein transport"/>
    <property type="evidence" value="ECO:0007669"/>
    <property type="project" value="UniProtKB-KW"/>
</dbReference>
<dbReference type="GO" id="GO:0010824">
    <property type="term" value="P:regulation of centrosome duplication"/>
    <property type="evidence" value="ECO:0000315"/>
    <property type="project" value="UniProtKB"/>
</dbReference>
<dbReference type="GO" id="GO:1901673">
    <property type="term" value="P:regulation of mitotic spindle assembly"/>
    <property type="evidence" value="ECO:0000315"/>
    <property type="project" value="UniProtKB"/>
</dbReference>
<dbReference type="GO" id="GO:0001919">
    <property type="term" value="P:regulation of receptor recycling"/>
    <property type="evidence" value="ECO:0007669"/>
    <property type="project" value="Ensembl"/>
</dbReference>
<dbReference type="GO" id="GO:0043162">
    <property type="term" value="P:ubiquitin-dependent protein catabolic process via the multivesicular body sorting pathway"/>
    <property type="evidence" value="ECO:0000314"/>
    <property type="project" value="ComplexPortal"/>
</dbReference>
<dbReference type="GO" id="GO:0006900">
    <property type="term" value="P:vesicle budding from membrane"/>
    <property type="evidence" value="ECO:0000318"/>
    <property type="project" value="GO_Central"/>
</dbReference>
<dbReference type="GO" id="GO:0051469">
    <property type="term" value="P:vesicle fusion with vacuole"/>
    <property type="evidence" value="ECO:0000303"/>
    <property type="project" value="ComplexPortal"/>
</dbReference>
<dbReference type="GO" id="GO:0046755">
    <property type="term" value="P:viral budding"/>
    <property type="evidence" value="ECO:0000315"/>
    <property type="project" value="UniProtKB"/>
</dbReference>
<dbReference type="GO" id="GO:0046761">
    <property type="term" value="P:viral budding from plasma membrane"/>
    <property type="evidence" value="ECO:0000314"/>
    <property type="project" value="ComplexPortal"/>
</dbReference>
<dbReference type="GO" id="GO:0039702">
    <property type="term" value="P:viral budding via host ESCRT complex"/>
    <property type="evidence" value="ECO:0000314"/>
    <property type="project" value="ComplexPortal"/>
</dbReference>
<dbReference type="Gene3D" id="6.10.140.1230">
    <property type="match status" value="1"/>
</dbReference>
<dbReference type="InterPro" id="IPR005024">
    <property type="entry name" value="Snf7_fam"/>
</dbReference>
<dbReference type="PANTHER" id="PTHR22761">
    <property type="entry name" value="CHARGED MULTIVESICULAR BODY PROTEIN"/>
    <property type="match status" value="1"/>
</dbReference>
<dbReference type="PANTHER" id="PTHR22761:SF12">
    <property type="entry name" value="CHARGED MULTIVESICULAR BODY PROTEIN 5"/>
    <property type="match status" value="1"/>
</dbReference>
<dbReference type="Pfam" id="PF03357">
    <property type="entry name" value="Snf7"/>
    <property type="match status" value="1"/>
</dbReference>
<reference key="1">
    <citation type="journal article" date="2000" name="Genome Res.">
        <title>Identification of novel human genes evolutionarily conserved in Caenorhabditis elegans by comparative proteomics.</title>
        <authorList>
            <person name="Lai C.-H."/>
            <person name="Chou C.-Y."/>
            <person name="Ch'ang L.-Y."/>
            <person name="Liu C.-S."/>
            <person name="Lin W.-C."/>
        </authorList>
    </citation>
    <scope>NUCLEOTIDE SEQUENCE [LARGE SCALE MRNA] (ISOFORM 1)</scope>
</reference>
<reference key="2">
    <citation type="journal article" date="2000" name="Genome Res.">
        <title>Cloning and functional analysis of cDNAs with open reading frames for 300 previously undefined genes expressed in CD34+ hematopoietic stem/progenitor cells.</title>
        <authorList>
            <person name="Zhang Q.-H."/>
            <person name="Ye M."/>
            <person name="Wu X.-Y."/>
            <person name="Ren S.-X."/>
            <person name="Zhao M."/>
            <person name="Zhao C.-J."/>
            <person name="Fu G."/>
            <person name="Shen Y."/>
            <person name="Fan H.-Y."/>
            <person name="Lu G."/>
            <person name="Zhong M."/>
            <person name="Xu X.-R."/>
            <person name="Han Z.-G."/>
            <person name="Zhang J.-W."/>
            <person name="Tao J."/>
            <person name="Huang Q.-H."/>
            <person name="Zhou J."/>
            <person name="Hu G.-X."/>
            <person name="Gu J."/>
            <person name="Chen S.-J."/>
            <person name="Chen Z."/>
        </authorList>
    </citation>
    <scope>NUCLEOTIDE SEQUENCE [LARGE SCALE MRNA] (ISOFORM 1)</scope>
    <source>
        <tissue>Umbilical cord blood</tissue>
    </source>
</reference>
<reference key="3">
    <citation type="journal article" date="2004" name="Nat. Genet.">
        <title>Complete sequencing and characterization of 21,243 full-length human cDNAs.</title>
        <authorList>
            <person name="Ota T."/>
            <person name="Suzuki Y."/>
            <person name="Nishikawa T."/>
            <person name="Otsuki T."/>
            <person name="Sugiyama T."/>
            <person name="Irie R."/>
            <person name="Wakamatsu A."/>
            <person name="Hayashi K."/>
            <person name="Sato H."/>
            <person name="Nagai K."/>
            <person name="Kimura K."/>
            <person name="Makita H."/>
            <person name="Sekine M."/>
            <person name="Obayashi M."/>
            <person name="Nishi T."/>
            <person name="Shibahara T."/>
            <person name="Tanaka T."/>
            <person name="Ishii S."/>
            <person name="Yamamoto J."/>
            <person name="Saito K."/>
            <person name="Kawai Y."/>
            <person name="Isono Y."/>
            <person name="Nakamura Y."/>
            <person name="Nagahari K."/>
            <person name="Murakami K."/>
            <person name="Yasuda T."/>
            <person name="Iwayanagi T."/>
            <person name="Wagatsuma M."/>
            <person name="Shiratori A."/>
            <person name="Sudo H."/>
            <person name="Hosoiri T."/>
            <person name="Kaku Y."/>
            <person name="Kodaira H."/>
            <person name="Kondo H."/>
            <person name="Sugawara M."/>
            <person name="Takahashi M."/>
            <person name="Kanda K."/>
            <person name="Yokoi T."/>
            <person name="Furuya T."/>
            <person name="Kikkawa E."/>
            <person name="Omura Y."/>
            <person name="Abe K."/>
            <person name="Kamihara K."/>
            <person name="Katsuta N."/>
            <person name="Sato K."/>
            <person name="Tanikawa M."/>
            <person name="Yamazaki M."/>
            <person name="Ninomiya K."/>
            <person name="Ishibashi T."/>
            <person name="Yamashita H."/>
            <person name="Murakawa K."/>
            <person name="Fujimori K."/>
            <person name="Tanai H."/>
            <person name="Kimata M."/>
            <person name="Watanabe M."/>
            <person name="Hiraoka S."/>
            <person name="Chiba Y."/>
            <person name="Ishida S."/>
            <person name="Ono Y."/>
            <person name="Takiguchi S."/>
            <person name="Watanabe S."/>
            <person name="Yosida M."/>
            <person name="Hotuta T."/>
            <person name="Kusano J."/>
            <person name="Kanehori K."/>
            <person name="Takahashi-Fujii A."/>
            <person name="Hara H."/>
            <person name="Tanase T.-O."/>
            <person name="Nomura Y."/>
            <person name="Togiya S."/>
            <person name="Komai F."/>
            <person name="Hara R."/>
            <person name="Takeuchi K."/>
            <person name="Arita M."/>
            <person name="Imose N."/>
            <person name="Musashino K."/>
            <person name="Yuuki H."/>
            <person name="Oshima A."/>
            <person name="Sasaki N."/>
            <person name="Aotsuka S."/>
            <person name="Yoshikawa Y."/>
            <person name="Matsunawa H."/>
            <person name="Ichihara T."/>
            <person name="Shiohata N."/>
            <person name="Sano S."/>
            <person name="Moriya S."/>
            <person name="Momiyama H."/>
            <person name="Satoh N."/>
            <person name="Takami S."/>
            <person name="Terashima Y."/>
            <person name="Suzuki O."/>
            <person name="Nakagawa S."/>
            <person name="Senoh A."/>
            <person name="Mizoguchi H."/>
            <person name="Goto Y."/>
            <person name="Shimizu F."/>
            <person name="Wakebe H."/>
            <person name="Hishigaki H."/>
            <person name="Watanabe T."/>
            <person name="Sugiyama A."/>
            <person name="Takemoto M."/>
            <person name="Kawakami B."/>
            <person name="Yamazaki M."/>
            <person name="Watanabe K."/>
            <person name="Kumagai A."/>
            <person name="Itakura S."/>
            <person name="Fukuzumi Y."/>
            <person name="Fujimori Y."/>
            <person name="Komiyama M."/>
            <person name="Tashiro H."/>
            <person name="Tanigami A."/>
            <person name="Fujiwara T."/>
            <person name="Ono T."/>
            <person name="Yamada K."/>
            <person name="Fujii Y."/>
            <person name="Ozaki K."/>
            <person name="Hirao M."/>
            <person name="Ohmori Y."/>
            <person name="Kawabata A."/>
            <person name="Hikiji T."/>
            <person name="Kobatake N."/>
            <person name="Inagaki H."/>
            <person name="Ikema Y."/>
            <person name="Okamoto S."/>
            <person name="Okitani R."/>
            <person name="Kawakami T."/>
            <person name="Noguchi S."/>
            <person name="Itoh T."/>
            <person name="Shigeta K."/>
            <person name="Senba T."/>
            <person name="Matsumura K."/>
            <person name="Nakajima Y."/>
            <person name="Mizuno T."/>
            <person name="Morinaga M."/>
            <person name="Sasaki M."/>
            <person name="Togashi T."/>
            <person name="Oyama M."/>
            <person name="Hata H."/>
            <person name="Watanabe M."/>
            <person name="Komatsu T."/>
            <person name="Mizushima-Sugano J."/>
            <person name="Satoh T."/>
            <person name="Shirai Y."/>
            <person name="Takahashi Y."/>
            <person name="Nakagawa K."/>
            <person name="Okumura K."/>
            <person name="Nagase T."/>
            <person name="Nomura N."/>
            <person name="Kikuchi H."/>
            <person name="Masuho Y."/>
            <person name="Yamashita R."/>
            <person name="Nakai K."/>
            <person name="Yada T."/>
            <person name="Nakamura Y."/>
            <person name="Ohara O."/>
            <person name="Isogai T."/>
            <person name="Sugano S."/>
        </authorList>
    </citation>
    <scope>NUCLEOTIDE SEQUENCE [LARGE SCALE MRNA] (ISOFORMS 1 AND 2)</scope>
    <source>
        <tissue>Hippocampus</tissue>
    </source>
</reference>
<reference key="4">
    <citation type="journal article" date="2004" name="Nature">
        <title>DNA sequence and analysis of human chromosome 9.</title>
        <authorList>
            <person name="Humphray S.J."/>
            <person name="Oliver K."/>
            <person name="Hunt A.R."/>
            <person name="Plumb R.W."/>
            <person name="Loveland J.E."/>
            <person name="Howe K.L."/>
            <person name="Andrews T.D."/>
            <person name="Searle S."/>
            <person name="Hunt S.E."/>
            <person name="Scott C.E."/>
            <person name="Jones M.C."/>
            <person name="Ainscough R."/>
            <person name="Almeida J.P."/>
            <person name="Ambrose K.D."/>
            <person name="Ashwell R.I.S."/>
            <person name="Babbage A.K."/>
            <person name="Babbage S."/>
            <person name="Bagguley C.L."/>
            <person name="Bailey J."/>
            <person name="Banerjee R."/>
            <person name="Barker D.J."/>
            <person name="Barlow K.F."/>
            <person name="Bates K."/>
            <person name="Beasley H."/>
            <person name="Beasley O."/>
            <person name="Bird C.P."/>
            <person name="Bray-Allen S."/>
            <person name="Brown A.J."/>
            <person name="Brown J.Y."/>
            <person name="Burford D."/>
            <person name="Burrill W."/>
            <person name="Burton J."/>
            <person name="Carder C."/>
            <person name="Carter N.P."/>
            <person name="Chapman J.C."/>
            <person name="Chen Y."/>
            <person name="Clarke G."/>
            <person name="Clark S.Y."/>
            <person name="Clee C.M."/>
            <person name="Clegg S."/>
            <person name="Collier R.E."/>
            <person name="Corby N."/>
            <person name="Crosier M."/>
            <person name="Cummings A.T."/>
            <person name="Davies J."/>
            <person name="Dhami P."/>
            <person name="Dunn M."/>
            <person name="Dutta I."/>
            <person name="Dyer L.W."/>
            <person name="Earthrowl M.E."/>
            <person name="Faulkner L."/>
            <person name="Fleming C.J."/>
            <person name="Frankish A."/>
            <person name="Frankland J.A."/>
            <person name="French L."/>
            <person name="Fricker D.G."/>
            <person name="Garner P."/>
            <person name="Garnett J."/>
            <person name="Ghori J."/>
            <person name="Gilbert J.G.R."/>
            <person name="Glison C."/>
            <person name="Grafham D.V."/>
            <person name="Gribble S."/>
            <person name="Griffiths C."/>
            <person name="Griffiths-Jones S."/>
            <person name="Grocock R."/>
            <person name="Guy J."/>
            <person name="Hall R.E."/>
            <person name="Hammond S."/>
            <person name="Harley J.L."/>
            <person name="Harrison E.S.I."/>
            <person name="Hart E.A."/>
            <person name="Heath P.D."/>
            <person name="Henderson C.D."/>
            <person name="Hopkins B.L."/>
            <person name="Howard P.J."/>
            <person name="Howden P.J."/>
            <person name="Huckle E."/>
            <person name="Johnson C."/>
            <person name="Johnson D."/>
            <person name="Joy A.A."/>
            <person name="Kay M."/>
            <person name="Keenan S."/>
            <person name="Kershaw J.K."/>
            <person name="Kimberley A.M."/>
            <person name="King A."/>
            <person name="Knights A."/>
            <person name="Laird G.K."/>
            <person name="Langford C."/>
            <person name="Lawlor S."/>
            <person name="Leongamornlert D.A."/>
            <person name="Leversha M."/>
            <person name="Lloyd C."/>
            <person name="Lloyd D.M."/>
            <person name="Lovell J."/>
            <person name="Martin S."/>
            <person name="Mashreghi-Mohammadi M."/>
            <person name="Matthews L."/>
            <person name="McLaren S."/>
            <person name="McLay K.E."/>
            <person name="McMurray A."/>
            <person name="Milne S."/>
            <person name="Nickerson T."/>
            <person name="Nisbett J."/>
            <person name="Nordsiek G."/>
            <person name="Pearce A.V."/>
            <person name="Peck A.I."/>
            <person name="Porter K.M."/>
            <person name="Pandian R."/>
            <person name="Pelan S."/>
            <person name="Phillimore B."/>
            <person name="Povey S."/>
            <person name="Ramsey Y."/>
            <person name="Rand V."/>
            <person name="Scharfe M."/>
            <person name="Sehra H.K."/>
            <person name="Shownkeen R."/>
            <person name="Sims S.K."/>
            <person name="Skuce C.D."/>
            <person name="Smith M."/>
            <person name="Steward C.A."/>
            <person name="Swarbreck D."/>
            <person name="Sycamore N."/>
            <person name="Tester J."/>
            <person name="Thorpe A."/>
            <person name="Tracey A."/>
            <person name="Tromans A."/>
            <person name="Thomas D.W."/>
            <person name="Wall M."/>
            <person name="Wallis J.M."/>
            <person name="West A.P."/>
            <person name="Whitehead S.L."/>
            <person name="Willey D.L."/>
            <person name="Williams S.A."/>
            <person name="Wilming L."/>
            <person name="Wray P.W."/>
            <person name="Young L."/>
            <person name="Ashurst J.L."/>
            <person name="Coulson A."/>
            <person name="Blocker H."/>
            <person name="Durbin R.M."/>
            <person name="Sulston J.E."/>
            <person name="Hubbard T."/>
            <person name="Jackson M.J."/>
            <person name="Bentley D.R."/>
            <person name="Beck S."/>
            <person name="Rogers J."/>
            <person name="Dunham I."/>
        </authorList>
    </citation>
    <scope>NUCLEOTIDE SEQUENCE [LARGE SCALE GENOMIC DNA]</scope>
</reference>
<reference key="5">
    <citation type="submission" date="2005-09" db="EMBL/GenBank/DDBJ databases">
        <authorList>
            <person name="Mural R.J."/>
            <person name="Istrail S."/>
            <person name="Sutton G.G."/>
            <person name="Florea L."/>
            <person name="Halpern A.L."/>
            <person name="Mobarry C.M."/>
            <person name="Lippert R."/>
            <person name="Walenz B."/>
            <person name="Shatkay H."/>
            <person name="Dew I."/>
            <person name="Miller J.R."/>
            <person name="Flanigan M.J."/>
            <person name="Edwards N.J."/>
            <person name="Bolanos R."/>
            <person name="Fasulo D."/>
            <person name="Halldorsson B.V."/>
            <person name="Hannenhalli S."/>
            <person name="Turner R."/>
            <person name="Yooseph S."/>
            <person name="Lu F."/>
            <person name="Nusskern D.R."/>
            <person name="Shue B.C."/>
            <person name="Zheng X.H."/>
            <person name="Zhong F."/>
            <person name="Delcher A.L."/>
            <person name="Huson D.H."/>
            <person name="Kravitz S.A."/>
            <person name="Mouchard L."/>
            <person name="Reinert K."/>
            <person name="Remington K.A."/>
            <person name="Clark A.G."/>
            <person name="Waterman M.S."/>
            <person name="Eichler E.E."/>
            <person name="Adams M.D."/>
            <person name="Hunkapiller M.W."/>
            <person name="Myers E.W."/>
            <person name="Venter J.C."/>
        </authorList>
    </citation>
    <scope>NUCLEOTIDE SEQUENCE [LARGE SCALE GENOMIC DNA]</scope>
</reference>
<reference key="6">
    <citation type="journal article" date="2004" name="Genome Res.">
        <title>The status, quality, and expansion of the NIH full-length cDNA project: the Mammalian Gene Collection (MGC).</title>
        <authorList>
            <consortium name="The MGC Project Team"/>
        </authorList>
    </citation>
    <scope>NUCLEOTIDE SEQUENCE [LARGE SCALE MRNA] (ISOFORM 1)</scope>
    <source>
        <tissue>Bone marrow</tissue>
        <tissue>Brain</tissue>
        <tissue>Kidney</tissue>
        <tissue>Urinary bladder</tissue>
    </source>
</reference>
<reference key="7">
    <citation type="submission" date="2000-06" db="EMBL/GenBank/DDBJ databases">
        <title>Human acute promyelocytic leukemia cell line NB4's apoptosis related genes.</title>
        <authorList>
            <person name="Yu W.-Q."/>
            <person name="Sun B.-Z."/>
            <person name="Chai Y.-B."/>
            <person name="Zhu F."/>
            <person name="Liu X.-S."/>
            <person name="Li Z."/>
            <person name="Lu F."/>
            <person name="Yan W."/>
            <person name="Yang H."/>
            <person name="Zhao Z.-L."/>
        </authorList>
    </citation>
    <scope>NUCLEOTIDE SEQUENCE [LARGE SCALE MRNA] OF 81-219 (ISOFORM 1)</scope>
    <source>
        <tissue>Promyelocytic leukemia</tissue>
    </source>
</reference>
<reference key="8">
    <citation type="journal article" date="2003" name="Proc. Natl. Acad. Sci. U.S.A.">
        <title>Divergent retroviral late-budding domains recruit vacuolar protein sorting factors by using alternative adaptor proteins.</title>
        <authorList>
            <person name="Martin-Serrano J."/>
            <person name="Yarovoy A."/>
            <person name="Perez-Caballero D."/>
            <person name="Bieniasz P.D."/>
        </authorList>
    </citation>
    <scope>FUNCTION IN HIV-1 BUDDING</scope>
    <scope>INTERACTION WITH CHMP2A</scope>
</reference>
<reference key="9">
    <citation type="journal article" date="2003" name="Proc. Natl. Acad. Sci. U.S.A.">
        <authorList>
            <person name="Martin-Serrano J."/>
            <person name="Yarovoy A."/>
            <person name="Perez-Caballero D."/>
            <person name="Bieniasz P.D."/>
        </authorList>
    </citation>
    <scope>ERRATUM OF PUBMED:14519844</scope>
</reference>
<reference key="10">
    <citation type="journal article" date="2005" name="J. Biol. Chem.">
        <title>The role of LIP5 and CHMP5 in multivesicular body formation and HIV-1 budding in mammalian cells.</title>
        <authorList>
            <person name="Ward D.M."/>
            <person name="Vaughn M.B."/>
            <person name="Shiflett S.L."/>
            <person name="White P.L."/>
            <person name="Pollock A.L."/>
            <person name="Hill J."/>
            <person name="Schnegelberger R."/>
            <person name="Sundquist W.I."/>
            <person name="Kaplan J."/>
        </authorList>
    </citation>
    <scope>SUBCELLULAR LOCATION</scope>
    <scope>INTERACTION WITH VTA1</scope>
</reference>
<reference key="11">
    <citation type="journal article" date="2007" name="EMBO J.">
        <title>Human ESCRT and ALIX proteins interact with proteins of the midbody and function in cytokinesis.</title>
        <authorList>
            <person name="Morita E."/>
            <person name="Sandrin V."/>
            <person name="Chung H.Y."/>
            <person name="Morham S.G."/>
            <person name="Gygi S.P."/>
            <person name="Rodesch C.K."/>
            <person name="Sundquist W.I."/>
        </authorList>
    </citation>
    <scope>SUBCELLULAR LOCATION</scope>
</reference>
<reference key="12">
    <citation type="journal article" date="2007" name="J. Biol. Chem.">
        <title>Targeting of AMSH to endosomes is required for epidermal growth factor receptor degradation.</title>
        <authorList>
            <person name="Ma Y.M."/>
            <person name="Boucrot E."/>
            <person name="Villen J."/>
            <person name="Affar el B."/>
            <person name="Gygi S.P."/>
            <person name="Goettlinger H.G."/>
            <person name="Kirchhausen T."/>
        </authorList>
    </citation>
    <scope>INTERACTION WITH VTA1</scope>
    <scope>IDENTIFICATION BY MASS SPECTROMETRY</scope>
</reference>
<reference key="13">
    <citation type="journal article" date="2008" name="Proc. Natl. Acad. Sci. U.S.A.">
        <title>A quantitative atlas of mitotic phosphorylation.</title>
        <authorList>
            <person name="Dephoure N."/>
            <person name="Zhou C."/>
            <person name="Villen J."/>
            <person name="Beausoleil S.A."/>
            <person name="Bakalarski C.E."/>
            <person name="Elledge S.J."/>
            <person name="Gygi S.P."/>
        </authorList>
    </citation>
    <scope>IDENTIFICATION BY MASS SPECTROMETRY [LARGE SCALE ANALYSIS]</scope>
    <source>
        <tissue>Cervix carcinoma</tissue>
    </source>
</reference>
<reference key="14">
    <citation type="journal article" date="2010" name="Sci. Signal.">
        <title>Quantitative phosphoproteomics reveals widespread full phosphorylation site occupancy during mitosis.</title>
        <authorList>
            <person name="Olsen J.V."/>
            <person name="Vermeulen M."/>
            <person name="Santamaria A."/>
            <person name="Kumar C."/>
            <person name="Miller M.L."/>
            <person name="Jensen L.J."/>
            <person name="Gnad F."/>
            <person name="Cox J."/>
            <person name="Jensen T.S."/>
            <person name="Nigg E.A."/>
            <person name="Brunak S."/>
            <person name="Mann M."/>
        </authorList>
    </citation>
    <scope>PHOSPHORYLATION [LARGE SCALE ANALYSIS] AT SER-86</scope>
    <scope>IDENTIFICATION BY MASS SPECTROMETRY [LARGE SCALE ANALYSIS]</scope>
    <source>
        <tissue>Cervix carcinoma</tissue>
    </source>
</reference>
<reference key="15">
    <citation type="journal article" date="2011" name="BMC Syst. Biol.">
        <title>Initial characterization of the human central proteome.</title>
        <authorList>
            <person name="Burkard T.R."/>
            <person name="Planyavsky M."/>
            <person name="Kaupe I."/>
            <person name="Breitwieser F.P."/>
            <person name="Buerckstuemmer T."/>
            <person name="Bennett K.L."/>
            <person name="Superti-Furga G."/>
            <person name="Colinge J."/>
        </authorList>
    </citation>
    <scope>IDENTIFICATION BY MASS SPECTROMETRY [LARGE SCALE ANALYSIS]</scope>
</reference>
<reference key="16">
    <citation type="journal article" date="2011" name="J. Virol.">
        <title>Mechanism of inhibition of retrovirus release from cells by interferon-induced gene ISG15.</title>
        <authorList>
            <person name="Kuang Z."/>
            <person name="Seo E.J."/>
            <person name="Leis J."/>
        </authorList>
    </citation>
    <scope>ISGYLATION</scope>
    <scope>INTERACTION WITH VTA1</scope>
</reference>
<reference key="17">
    <citation type="journal article" date="2014" name="J. Proteomics">
        <title>An enzyme assisted RP-RPLC approach for in-depth analysis of human liver phosphoproteome.</title>
        <authorList>
            <person name="Bian Y."/>
            <person name="Song C."/>
            <person name="Cheng K."/>
            <person name="Dong M."/>
            <person name="Wang F."/>
            <person name="Huang J."/>
            <person name="Sun D."/>
            <person name="Wang L."/>
            <person name="Ye M."/>
            <person name="Zou H."/>
        </authorList>
    </citation>
    <scope>IDENTIFICATION BY MASS SPECTROMETRY [LARGE SCALE ANALYSIS]</scope>
    <source>
        <tissue>Liver</tissue>
    </source>
</reference>
<reference key="18">
    <citation type="journal article" date="2016" name="PLoS ONE">
        <title>Characterization and Genetic Analyses of New Genes Coding for NOD2 Interacting Proteins.</title>
        <authorList>
            <person name="Thiebaut R."/>
            <person name="Esmiol S."/>
            <person name="Lecine P."/>
            <person name="Mahfouz B."/>
            <person name="Hermant A."/>
            <person name="Nicoletti C."/>
            <person name="Parnis S."/>
            <person name="Perroy J."/>
            <person name="Borg J.P."/>
            <person name="Pascoe L."/>
            <person name="Hugot J.P."/>
            <person name="Ollendorff V."/>
        </authorList>
    </citation>
    <scope>INTERACTION WITH NOD2</scope>
    <scope>INDUCTION</scope>
</reference>
<reference key="19">
    <citation type="journal article" date="2018" name="Nat. Microbiol.">
        <title>Nepsilon-fatty acylation of multiple membrane-associated proteins by Shigella IcsB effector to modulate host function.</title>
        <authorList>
            <person name="Liu W."/>
            <person name="Zhou Y."/>
            <person name="Peng T."/>
            <person name="Zhou P."/>
            <person name="Ding X."/>
            <person name="Li Z."/>
            <person name="Zhong H."/>
            <person name="Xu Y."/>
            <person name="Chen S."/>
            <person name="Hang H.C."/>
            <person name="Shao F."/>
        </authorList>
    </citation>
    <scope>STEAROYLATION AT LYS-7 (MICROBIAL INFECTION)</scope>
    <scope>MUTAGENESIS OF 7-LYS--LYS-11 AND LYS-7</scope>
</reference>
<reference evidence="14 15 16 17" key="20">
    <citation type="journal article" date="2012" name="Structure">
        <title>Two distinct binding modes define the interaction of Brox with the C-terminal tails of CHMP5 and CHMP4B.</title>
        <authorList>
            <person name="Mu R."/>
            <person name="Dussupt V."/>
            <person name="Jiang J."/>
            <person name="Sette P."/>
            <person name="Rudd V."/>
            <person name="Chuenchor W."/>
            <person name="Bello N.F."/>
            <person name="Bouamr F."/>
            <person name="Xiao T.S."/>
        </authorList>
    </citation>
    <scope>X-RAY CRYSTALLOGRAPHY (2.59 ANGSTROMS) OF 2-377 IN COMPLEX WITH BROX</scope>
</reference>